<gene>
    <name evidence="1" type="primary">rpmA</name>
    <name type="ordered locus">Cagg_3073</name>
</gene>
<organism>
    <name type="scientific">Chloroflexus aggregans (strain MD-66 / DSM 9485)</name>
    <dbReference type="NCBI Taxonomy" id="326427"/>
    <lineage>
        <taxon>Bacteria</taxon>
        <taxon>Bacillati</taxon>
        <taxon>Chloroflexota</taxon>
        <taxon>Chloroflexia</taxon>
        <taxon>Chloroflexales</taxon>
        <taxon>Chloroflexineae</taxon>
        <taxon>Chloroflexaceae</taxon>
        <taxon>Chloroflexus</taxon>
    </lineage>
</organism>
<name>RL27_CHLAD</name>
<sequence length="91" mass="9781">MAHKKGVGSSRNGRDSNPKMRGVKRFGGELVRAGNIIVRQCGTKIKPGANVGVGRDWTLYALVDGVVQFSHYSRTQKKVSVIPVAAETTAN</sequence>
<feature type="chain" id="PRO_1000146518" description="Large ribosomal subunit protein bL27">
    <location>
        <begin position="1"/>
        <end position="91"/>
    </location>
</feature>
<feature type="region of interest" description="Disordered" evidence="2">
    <location>
        <begin position="1"/>
        <end position="24"/>
    </location>
</feature>
<accession>B8G6X2</accession>
<protein>
    <recommendedName>
        <fullName evidence="1">Large ribosomal subunit protein bL27</fullName>
    </recommendedName>
    <alternativeName>
        <fullName evidence="3">50S ribosomal protein L27</fullName>
    </alternativeName>
</protein>
<proteinExistence type="inferred from homology"/>
<keyword id="KW-0687">Ribonucleoprotein</keyword>
<keyword id="KW-0689">Ribosomal protein</keyword>
<reference key="1">
    <citation type="submission" date="2008-12" db="EMBL/GenBank/DDBJ databases">
        <title>Complete sequence of Chloroflexus aggregans DSM 9485.</title>
        <authorList>
            <consortium name="US DOE Joint Genome Institute"/>
            <person name="Lucas S."/>
            <person name="Copeland A."/>
            <person name="Lapidus A."/>
            <person name="Glavina del Rio T."/>
            <person name="Dalin E."/>
            <person name="Tice H."/>
            <person name="Pitluck S."/>
            <person name="Foster B."/>
            <person name="Larimer F."/>
            <person name="Land M."/>
            <person name="Hauser L."/>
            <person name="Kyrpides N."/>
            <person name="Mikhailova N."/>
            <person name="Bryant D.A."/>
            <person name="Richardson P."/>
        </authorList>
    </citation>
    <scope>NUCLEOTIDE SEQUENCE [LARGE SCALE GENOMIC DNA]</scope>
    <source>
        <strain>MD-66 / DSM 9485</strain>
    </source>
</reference>
<evidence type="ECO:0000255" key="1">
    <source>
        <dbReference type="HAMAP-Rule" id="MF_00539"/>
    </source>
</evidence>
<evidence type="ECO:0000256" key="2">
    <source>
        <dbReference type="SAM" id="MobiDB-lite"/>
    </source>
</evidence>
<evidence type="ECO:0000305" key="3"/>
<comment type="similarity">
    <text evidence="1">Belongs to the bacterial ribosomal protein bL27 family.</text>
</comment>
<dbReference type="EMBL" id="CP001337">
    <property type="protein sequence ID" value="ACL25931.1"/>
    <property type="molecule type" value="Genomic_DNA"/>
</dbReference>
<dbReference type="RefSeq" id="WP_015941783.1">
    <property type="nucleotide sequence ID" value="NC_011831.1"/>
</dbReference>
<dbReference type="SMR" id="B8G6X2"/>
<dbReference type="STRING" id="326427.Cagg_3073"/>
<dbReference type="KEGG" id="cag:Cagg_3073"/>
<dbReference type="eggNOG" id="COG0211">
    <property type="taxonomic scope" value="Bacteria"/>
</dbReference>
<dbReference type="HOGENOM" id="CLU_095424_4_0_0"/>
<dbReference type="OrthoDB" id="9803474at2"/>
<dbReference type="Proteomes" id="UP000002508">
    <property type="component" value="Chromosome"/>
</dbReference>
<dbReference type="GO" id="GO:0022625">
    <property type="term" value="C:cytosolic large ribosomal subunit"/>
    <property type="evidence" value="ECO:0007669"/>
    <property type="project" value="TreeGrafter"/>
</dbReference>
<dbReference type="GO" id="GO:0003735">
    <property type="term" value="F:structural constituent of ribosome"/>
    <property type="evidence" value="ECO:0007669"/>
    <property type="project" value="InterPro"/>
</dbReference>
<dbReference type="GO" id="GO:0006412">
    <property type="term" value="P:translation"/>
    <property type="evidence" value="ECO:0007669"/>
    <property type="project" value="UniProtKB-UniRule"/>
</dbReference>
<dbReference type="FunFam" id="2.40.50.100:FF:000026">
    <property type="entry name" value="50S ribosomal protein L27"/>
    <property type="match status" value="1"/>
</dbReference>
<dbReference type="Gene3D" id="2.40.50.100">
    <property type="match status" value="1"/>
</dbReference>
<dbReference type="HAMAP" id="MF_00539">
    <property type="entry name" value="Ribosomal_bL27"/>
    <property type="match status" value="1"/>
</dbReference>
<dbReference type="InterPro" id="IPR001684">
    <property type="entry name" value="Ribosomal_bL27"/>
</dbReference>
<dbReference type="NCBIfam" id="TIGR00062">
    <property type="entry name" value="L27"/>
    <property type="match status" value="1"/>
</dbReference>
<dbReference type="PANTHER" id="PTHR15893:SF0">
    <property type="entry name" value="LARGE RIBOSOMAL SUBUNIT PROTEIN BL27M"/>
    <property type="match status" value="1"/>
</dbReference>
<dbReference type="PANTHER" id="PTHR15893">
    <property type="entry name" value="RIBOSOMAL PROTEIN L27"/>
    <property type="match status" value="1"/>
</dbReference>
<dbReference type="Pfam" id="PF01016">
    <property type="entry name" value="Ribosomal_L27"/>
    <property type="match status" value="1"/>
</dbReference>
<dbReference type="PRINTS" id="PR00063">
    <property type="entry name" value="RIBOSOMALL27"/>
</dbReference>
<dbReference type="SUPFAM" id="SSF110324">
    <property type="entry name" value="Ribosomal L27 protein-like"/>
    <property type="match status" value="1"/>
</dbReference>